<protein>
    <recommendedName>
        <fullName>Carbamoyl phosphate synthase arginine-specific small chain</fullName>
        <shortName>CPS</shortName>
        <shortName>CPSase</shortName>
        <ecNumber evidence="1">6.3.5.5</ecNumber>
    </recommendedName>
    <alternativeName>
        <fullName>Arginine-specific carbamoyl phosphate synthetase, glutamine chain</fullName>
    </alternativeName>
    <alternativeName>
        <fullName>Glutamine-dependent carbamoyl phosphate synthetase</fullName>
    </alternativeName>
</protein>
<organism>
    <name type="scientific">Candida albicans (strain SC5314 / ATCC MYA-2876)</name>
    <name type="common">Yeast</name>
    <dbReference type="NCBI Taxonomy" id="237561"/>
    <lineage>
        <taxon>Eukaryota</taxon>
        <taxon>Fungi</taxon>
        <taxon>Dikarya</taxon>
        <taxon>Ascomycota</taxon>
        <taxon>Saccharomycotina</taxon>
        <taxon>Pichiomycetes</taxon>
        <taxon>Debaryomycetaceae</taxon>
        <taxon>Candida/Lodderomyces clade</taxon>
        <taxon>Candida</taxon>
    </lineage>
</organism>
<gene>
    <name type="primary">CPA1</name>
    <name type="ordered locus">CAALFM_C401550CA</name>
    <name type="ORF">CaO19.12100</name>
    <name type="ORF">CaO19.4630</name>
</gene>
<feature type="transit peptide" description="Mitochondrion" evidence="2">
    <location>
        <begin position="1"/>
        <end position="9"/>
    </location>
</feature>
<feature type="chain" id="PRO_0000290590" description="Carbamoyl phosphate synthase arginine-specific small chain" evidence="2">
    <location>
        <begin position="10"/>
        <end position="430"/>
    </location>
</feature>
<feature type="domain" description="Glutamine amidotransferase type-1" evidence="3">
    <location>
        <begin position="219"/>
        <end position="407"/>
    </location>
</feature>
<feature type="active site" description="Nucleophile" evidence="3">
    <location>
        <position position="296"/>
    </location>
</feature>
<feature type="active site" evidence="3">
    <location>
        <position position="380"/>
    </location>
</feature>
<feature type="active site" evidence="3">
    <location>
        <position position="382"/>
    </location>
</feature>
<reference key="1">
    <citation type="journal article" date="2004" name="Proc. Natl. Acad. Sci. U.S.A.">
        <title>The diploid genome sequence of Candida albicans.</title>
        <authorList>
            <person name="Jones T."/>
            <person name="Federspiel N.A."/>
            <person name="Chibana H."/>
            <person name="Dungan J."/>
            <person name="Kalman S."/>
            <person name="Magee B.B."/>
            <person name="Newport G."/>
            <person name="Thorstenson Y.R."/>
            <person name="Agabian N."/>
            <person name="Magee P.T."/>
            <person name="Davis R.W."/>
            <person name="Scherer S."/>
        </authorList>
    </citation>
    <scope>NUCLEOTIDE SEQUENCE [LARGE SCALE GENOMIC DNA]</scope>
    <source>
        <strain>SC5314 / ATCC MYA-2876</strain>
    </source>
</reference>
<reference key="2">
    <citation type="journal article" date="2007" name="Genome Biol.">
        <title>Assembly of the Candida albicans genome into sixteen supercontigs aligned on the eight chromosomes.</title>
        <authorList>
            <person name="van het Hoog M."/>
            <person name="Rast T.J."/>
            <person name="Martchenko M."/>
            <person name="Grindle S."/>
            <person name="Dignard D."/>
            <person name="Hogues H."/>
            <person name="Cuomo C."/>
            <person name="Berriman M."/>
            <person name="Scherer S."/>
            <person name="Magee B.B."/>
            <person name="Whiteway M."/>
            <person name="Chibana H."/>
            <person name="Nantel A."/>
            <person name="Magee P.T."/>
        </authorList>
    </citation>
    <scope>GENOME REANNOTATION</scope>
    <source>
        <strain>SC5314 / ATCC MYA-2876</strain>
    </source>
</reference>
<reference key="3">
    <citation type="journal article" date="2013" name="Genome Biol.">
        <title>Assembly of a phased diploid Candida albicans genome facilitates allele-specific measurements and provides a simple model for repeat and indel structure.</title>
        <authorList>
            <person name="Muzzey D."/>
            <person name="Schwartz K."/>
            <person name="Weissman J.S."/>
            <person name="Sherlock G."/>
        </authorList>
    </citation>
    <scope>NUCLEOTIDE SEQUENCE [LARGE SCALE GENOMIC DNA]</scope>
    <scope>GENOME REANNOTATION</scope>
    <source>
        <strain>SC5314 / ATCC MYA-2876</strain>
    </source>
</reference>
<name>CARA_CANAL</name>
<comment type="function">
    <text evidence="1">Small subunit of the arginine-specific carbamoyl phosphate synthase (CPSase). CPSase catalyzes the formation of carbamoyl phosphate from the ammonia moiety of glutamine, carbonate, and phosphate donated by ATP, the first step of the arginine biosynthetic pathway. The small subunit (glutamine amidotransferase) binds and cleaves glutamine to supply the large subunit with the substrate ammonia.</text>
</comment>
<comment type="catalytic activity">
    <reaction evidence="1">
        <text>hydrogencarbonate + L-glutamine + 2 ATP + H2O = carbamoyl phosphate + L-glutamate + 2 ADP + phosphate + 2 H(+)</text>
        <dbReference type="Rhea" id="RHEA:18633"/>
        <dbReference type="ChEBI" id="CHEBI:15377"/>
        <dbReference type="ChEBI" id="CHEBI:15378"/>
        <dbReference type="ChEBI" id="CHEBI:17544"/>
        <dbReference type="ChEBI" id="CHEBI:29985"/>
        <dbReference type="ChEBI" id="CHEBI:30616"/>
        <dbReference type="ChEBI" id="CHEBI:43474"/>
        <dbReference type="ChEBI" id="CHEBI:58228"/>
        <dbReference type="ChEBI" id="CHEBI:58359"/>
        <dbReference type="ChEBI" id="CHEBI:456216"/>
        <dbReference type="EC" id="6.3.5.5"/>
    </reaction>
</comment>
<comment type="catalytic activity">
    <molecule>Carbamoyl phosphate synthase arginine-specific small chain</molecule>
    <reaction evidence="1">
        <text>L-glutamine + H2O = L-glutamate + NH4(+)</text>
        <dbReference type="Rhea" id="RHEA:15889"/>
        <dbReference type="ChEBI" id="CHEBI:15377"/>
        <dbReference type="ChEBI" id="CHEBI:28938"/>
        <dbReference type="ChEBI" id="CHEBI:29985"/>
        <dbReference type="ChEBI" id="CHEBI:58359"/>
    </reaction>
</comment>
<comment type="pathway">
    <text evidence="1">Amino-acid biosynthesis; L-arginine biosynthesis; carbamoyl phosphate from bicarbonate: step 1/1.</text>
</comment>
<comment type="subunit">
    <text evidence="1">Heterodimer composed of 2 chains; the small (or glutamine) chain promotes the hydrolysis of glutamine to ammonia, which is used by the large (or ammonia) chain to synthesize carbamoyl phosphate.</text>
</comment>
<comment type="subcellular location">
    <subcellularLocation>
        <location evidence="1">Mitochondrion matrix</location>
    </subcellularLocation>
</comment>
<comment type="similarity">
    <text evidence="4">Belongs to the CarA family.</text>
</comment>
<dbReference type="EC" id="6.3.5.5" evidence="1"/>
<dbReference type="EMBL" id="CP017626">
    <property type="protein sequence ID" value="AOW28935.1"/>
    <property type="molecule type" value="Genomic_DNA"/>
</dbReference>
<dbReference type="RefSeq" id="XP_722702.1">
    <property type="nucleotide sequence ID" value="XM_717609.2"/>
</dbReference>
<dbReference type="SMR" id="Q5AML6"/>
<dbReference type="FunCoup" id="Q5AML6">
    <property type="interactions" value="388"/>
</dbReference>
<dbReference type="STRING" id="237561.Q5AML6"/>
<dbReference type="EnsemblFungi" id="C4_01550C_A-T">
    <property type="protein sequence ID" value="C4_01550C_A-T-p1"/>
    <property type="gene ID" value="C4_01550C_A"/>
</dbReference>
<dbReference type="GeneID" id="3635715"/>
<dbReference type="KEGG" id="cal:CAALFM_C401550CA"/>
<dbReference type="CGD" id="CAL0000174966">
    <property type="gene designation" value="CPA1"/>
</dbReference>
<dbReference type="VEuPathDB" id="FungiDB:C4_01550C_A"/>
<dbReference type="eggNOG" id="KOG0370">
    <property type="taxonomic scope" value="Eukaryota"/>
</dbReference>
<dbReference type="HOGENOM" id="CLU_035901_1_0_1"/>
<dbReference type="InParanoid" id="Q5AML6"/>
<dbReference type="OrthoDB" id="434at2759"/>
<dbReference type="UniPathway" id="UPA00068">
    <property type="reaction ID" value="UER00171"/>
</dbReference>
<dbReference type="PRO" id="PR:Q5AML6"/>
<dbReference type="Proteomes" id="UP000000559">
    <property type="component" value="Chromosome 4"/>
</dbReference>
<dbReference type="GO" id="GO:0005951">
    <property type="term" value="C:carbamoyl-phosphate synthase complex"/>
    <property type="evidence" value="ECO:0000318"/>
    <property type="project" value="GO_Central"/>
</dbReference>
<dbReference type="GO" id="GO:0005737">
    <property type="term" value="C:cytoplasm"/>
    <property type="evidence" value="ECO:0000318"/>
    <property type="project" value="GO_Central"/>
</dbReference>
<dbReference type="GO" id="GO:0005759">
    <property type="term" value="C:mitochondrial matrix"/>
    <property type="evidence" value="ECO:0007669"/>
    <property type="project" value="UniProtKB-SubCell"/>
</dbReference>
<dbReference type="GO" id="GO:0005524">
    <property type="term" value="F:ATP binding"/>
    <property type="evidence" value="ECO:0007669"/>
    <property type="project" value="UniProtKB-KW"/>
</dbReference>
<dbReference type="GO" id="GO:0004088">
    <property type="term" value="F:carbamoyl-phosphate synthase (glutamine-hydrolyzing) activity"/>
    <property type="evidence" value="ECO:0007669"/>
    <property type="project" value="UniProtKB-EC"/>
</dbReference>
<dbReference type="GO" id="GO:0004359">
    <property type="term" value="F:glutaminase activity"/>
    <property type="evidence" value="ECO:0007669"/>
    <property type="project" value="RHEA"/>
</dbReference>
<dbReference type="GO" id="GO:0006207">
    <property type="term" value="P:'de novo' pyrimidine nucleobase biosynthetic process"/>
    <property type="evidence" value="ECO:0007669"/>
    <property type="project" value="InterPro"/>
</dbReference>
<dbReference type="GO" id="GO:0006541">
    <property type="term" value="P:glutamine metabolic process"/>
    <property type="evidence" value="ECO:0007669"/>
    <property type="project" value="InterPro"/>
</dbReference>
<dbReference type="GO" id="GO:0006526">
    <property type="term" value="P:L-arginine biosynthetic process"/>
    <property type="evidence" value="ECO:0000318"/>
    <property type="project" value="GO_Central"/>
</dbReference>
<dbReference type="GO" id="GO:0006221">
    <property type="term" value="P:pyrimidine nucleotide biosynthetic process"/>
    <property type="evidence" value="ECO:0007669"/>
    <property type="project" value="EnsemblFungi"/>
</dbReference>
<dbReference type="CDD" id="cd01744">
    <property type="entry name" value="GATase1_CPSase"/>
    <property type="match status" value="1"/>
</dbReference>
<dbReference type="FunFam" id="3.40.50.880:FF:000016">
    <property type="entry name" value="Carbamoyl-phosphate synthase arginine-specific small chain"/>
    <property type="match status" value="1"/>
</dbReference>
<dbReference type="FunFam" id="3.50.30.20:FF:000003">
    <property type="entry name" value="Carbamoyl-phosphate synthase arginine-specific small chain"/>
    <property type="match status" value="1"/>
</dbReference>
<dbReference type="Gene3D" id="3.40.50.880">
    <property type="match status" value="1"/>
</dbReference>
<dbReference type="Gene3D" id="3.50.30.20">
    <property type="entry name" value="Carbamoyl-phosphate synthase small subunit, N-terminal domain"/>
    <property type="match status" value="1"/>
</dbReference>
<dbReference type="HAMAP" id="MF_01209">
    <property type="entry name" value="CPSase_S_chain"/>
    <property type="match status" value="1"/>
</dbReference>
<dbReference type="InterPro" id="IPR050472">
    <property type="entry name" value="Anth_synth/Amidotransfase"/>
</dbReference>
<dbReference type="InterPro" id="IPR006274">
    <property type="entry name" value="CarbamoylP_synth_ssu"/>
</dbReference>
<dbReference type="InterPro" id="IPR002474">
    <property type="entry name" value="CarbamoylP_synth_ssu_N"/>
</dbReference>
<dbReference type="InterPro" id="IPR036480">
    <property type="entry name" value="CarbP_synth_ssu_N_sf"/>
</dbReference>
<dbReference type="InterPro" id="IPR029062">
    <property type="entry name" value="Class_I_gatase-like"/>
</dbReference>
<dbReference type="InterPro" id="IPR035686">
    <property type="entry name" value="CPSase_GATase1"/>
</dbReference>
<dbReference type="InterPro" id="IPR017926">
    <property type="entry name" value="GATASE"/>
</dbReference>
<dbReference type="NCBIfam" id="TIGR01368">
    <property type="entry name" value="CPSaseIIsmall"/>
    <property type="match status" value="1"/>
</dbReference>
<dbReference type="NCBIfam" id="NF009475">
    <property type="entry name" value="PRK12838.1"/>
    <property type="match status" value="1"/>
</dbReference>
<dbReference type="PANTHER" id="PTHR43418:SF7">
    <property type="entry name" value="CARBAMOYL-PHOSPHATE SYNTHASE SMALL CHAIN"/>
    <property type="match status" value="1"/>
</dbReference>
<dbReference type="PANTHER" id="PTHR43418">
    <property type="entry name" value="MULTIFUNCTIONAL TRYPTOPHAN BIOSYNTHESIS PROTEIN-RELATED"/>
    <property type="match status" value="1"/>
</dbReference>
<dbReference type="Pfam" id="PF00988">
    <property type="entry name" value="CPSase_sm_chain"/>
    <property type="match status" value="1"/>
</dbReference>
<dbReference type="Pfam" id="PF00117">
    <property type="entry name" value="GATase"/>
    <property type="match status" value="1"/>
</dbReference>
<dbReference type="PRINTS" id="PR00097">
    <property type="entry name" value="ANTSNTHASEII"/>
</dbReference>
<dbReference type="PRINTS" id="PR00099">
    <property type="entry name" value="CPSGATASE"/>
</dbReference>
<dbReference type="PRINTS" id="PR00096">
    <property type="entry name" value="GATASE"/>
</dbReference>
<dbReference type="SMART" id="SM01097">
    <property type="entry name" value="CPSase_sm_chain"/>
    <property type="match status" value="1"/>
</dbReference>
<dbReference type="SUPFAM" id="SSF52021">
    <property type="entry name" value="Carbamoyl phosphate synthetase, small subunit N-terminal domain"/>
    <property type="match status" value="1"/>
</dbReference>
<dbReference type="SUPFAM" id="SSF52317">
    <property type="entry name" value="Class I glutamine amidotransferase-like"/>
    <property type="match status" value="1"/>
</dbReference>
<dbReference type="PROSITE" id="PS51273">
    <property type="entry name" value="GATASE_TYPE_1"/>
    <property type="match status" value="1"/>
</dbReference>
<evidence type="ECO:0000250" key="1">
    <source>
        <dbReference type="UniProtKB" id="P22572"/>
    </source>
</evidence>
<evidence type="ECO:0000255" key="2"/>
<evidence type="ECO:0000255" key="3">
    <source>
        <dbReference type="PROSITE-ProRule" id="PRU00605"/>
    </source>
</evidence>
<evidence type="ECO:0000305" key="4"/>
<accession>Q5AML6</accession>
<accession>A0A1D8PLB4</accession>
<accession>Q5AN21</accession>
<proteinExistence type="inferred from homology"/>
<keyword id="KW-0028">Amino-acid biosynthesis</keyword>
<keyword id="KW-0055">Arginine biosynthesis</keyword>
<keyword id="KW-0067">ATP-binding</keyword>
<keyword id="KW-0315">Glutamine amidotransferase</keyword>
<keyword id="KW-0436">Ligase</keyword>
<keyword id="KW-0496">Mitochondrion</keyword>
<keyword id="KW-0547">Nucleotide-binding</keyword>
<keyword id="KW-1185">Reference proteome</keyword>
<keyword id="KW-0809">Transit peptide</keyword>
<sequence length="430" mass="46898">MLSATKRYLATAAAAAATNTTTTSKAFTNTTSQLGRATLTIKDGPVFNGYSFGANRNVSGEAVFTTSLVGYPESMTDPSYRGQILCFTQPLIGNYGVPSSTAKDQFNLLKYMESPKVQCIGIVVADAALEYSHWTAVESLQQWCKRSGVAAITGVDTRQLVSYLRDKGSSLGRITIGEEYDADEDAAFEDPGAINLVHKVTTKAPFHIACPPQYSKGIHIAVLDCGAKENILRCLVERGASLTVFPYDYPIDKIANKFDGIFISNGPGDPTHCSTTVNNLKKIITNHQDLPIFGICLGHQLLALASGAKTIKLKYGNRAHNIPAIDLITGNCHITSQNHGYAVDANTLSENWQPYFTNLNDLSNEGMIHKYQPIFSTQFHPEAKGGPLDTSFLFDKFFDNINVYKKSNGLNLPPVENSLLVDILPKERVE</sequence>